<evidence type="ECO:0000255" key="1">
    <source>
        <dbReference type="HAMAP-Rule" id="MF_01456"/>
    </source>
</evidence>
<proteinExistence type="inferred from homology"/>
<sequence>MIGLNHYLIVSGLLFCIGLAGMLKRKNILLLFFSTEIMLNAINIGFVAISKYTHNLDGQMFALFIIAIAASEVAIGLGLVILWFKKYKSLDIDSLNAMKG</sequence>
<reference key="1">
    <citation type="journal article" date="2006" name="Proc. Natl. Acad. Sci. U.S.A.">
        <title>The complete genome sequence of a chronic atrophic gastritis Helicobacter pylori strain: evolution during disease progression.</title>
        <authorList>
            <person name="Oh J.D."/>
            <person name="Kling-Baeckhed H."/>
            <person name="Giannakis M."/>
            <person name="Xu J."/>
            <person name="Fulton R.S."/>
            <person name="Fulton L.A."/>
            <person name="Cordum H.S."/>
            <person name="Wang C."/>
            <person name="Elliott G."/>
            <person name="Edwards J."/>
            <person name="Mardis E.R."/>
            <person name="Engstrand L.G."/>
            <person name="Gordon J.I."/>
        </authorList>
    </citation>
    <scope>NUCLEOTIDE SEQUENCE [LARGE SCALE GENOMIC DNA]</scope>
    <source>
        <strain>HPAG1</strain>
    </source>
</reference>
<comment type="function">
    <text evidence="1">NDH-1 shuttles electrons from NADH, via FMN and iron-sulfur (Fe-S) centers, to quinones in the respiratory chain. The immediate electron acceptor for the enzyme in this species is believed to be ubiquinone. Couples the redox reaction to proton translocation (for every two electrons transferred, four hydrogen ions are translocated across the cytoplasmic membrane), and thus conserves the redox energy in a proton gradient.</text>
</comment>
<comment type="catalytic activity">
    <reaction evidence="1">
        <text>a quinone + NADH + 5 H(+)(in) = a quinol + NAD(+) + 4 H(+)(out)</text>
        <dbReference type="Rhea" id="RHEA:57888"/>
        <dbReference type="ChEBI" id="CHEBI:15378"/>
        <dbReference type="ChEBI" id="CHEBI:24646"/>
        <dbReference type="ChEBI" id="CHEBI:57540"/>
        <dbReference type="ChEBI" id="CHEBI:57945"/>
        <dbReference type="ChEBI" id="CHEBI:132124"/>
    </reaction>
</comment>
<comment type="subunit">
    <text evidence="1">NDH-1 is composed of 14 different subunits. Subunits NuoA, H, J, K, L, M, N constitute the membrane sector of the complex.</text>
</comment>
<comment type="subcellular location">
    <subcellularLocation>
        <location evidence="1">Cell inner membrane</location>
        <topology evidence="1">Multi-pass membrane protein</topology>
    </subcellularLocation>
</comment>
<comment type="similarity">
    <text evidence="1">Belongs to the complex I subunit 4L family.</text>
</comment>
<accession>Q1CRZ1</accession>
<name>NUOK_HELPH</name>
<dbReference type="EC" id="7.1.1.-" evidence="1"/>
<dbReference type="EMBL" id="CP000241">
    <property type="protein sequence ID" value="ABF85281.1"/>
    <property type="molecule type" value="Genomic_DNA"/>
</dbReference>
<dbReference type="RefSeq" id="WP_000579759.1">
    <property type="nucleotide sequence ID" value="NC_008086.1"/>
</dbReference>
<dbReference type="SMR" id="Q1CRZ1"/>
<dbReference type="KEGG" id="hpa:HPAG1_1214"/>
<dbReference type="HOGENOM" id="CLU_144724_0_0_7"/>
<dbReference type="GO" id="GO:0030964">
    <property type="term" value="C:NADH dehydrogenase complex"/>
    <property type="evidence" value="ECO:0007669"/>
    <property type="project" value="TreeGrafter"/>
</dbReference>
<dbReference type="GO" id="GO:0005886">
    <property type="term" value="C:plasma membrane"/>
    <property type="evidence" value="ECO:0007669"/>
    <property type="project" value="UniProtKB-SubCell"/>
</dbReference>
<dbReference type="GO" id="GO:0050136">
    <property type="term" value="F:NADH:ubiquinone reductase (non-electrogenic) activity"/>
    <property type="evidence" value="ECO:0007669"/>
    <property type="project" value="UniProtKB-UniRule"/>
</dbReference>
<dbReference type="GO" id="GO:0048038">
    <property type="term" value="F:quinone binding"/>
    <property type="evidence" value="ECO:0007669"/>
    <property type="project" value="UniProtKB-KW"/>
</dbReference>
<dbReference type="GO" id="GO:0042773">
    <property type="term" value="P:ATP synthesis coupled electron transport"/>
    <property type="evidence" value="ECO:0007669"/>
    <property type="project" value="InterPro"/>
</dbReference>
<dbReference type="FunFam" id="1.10.287.3510:FF:000001">
    <property type="entry name" value="NADH-quinone oxidoreductase subunit K"/>
    <property type="match status" value="1"/>
</dbReference>
<dbReference type="Gene3D" id="1.10.287.3510">
    <property type="match status" value="1"/>
</dbReference>
<dbReference type="HAMAP" id="MF_01456">
    <property type="entry name" value="NDH1_NuoK"/>
    <property type="match status" value="1"/>
</dbReference>
<dbReference type="InterPro" id="IPR001133">
    <property type="entry name" value="NADH_UbQ_OxRdtase_chain4L/K"/>
</dbReference>
<dbReference type="InterPro" id="IPR039428">
    <property type="entry name" value="NUOK/Mnh_C1-like"/>
</dbReference>
<dbReference type="NCBIfam" id="NF004320">
    <property type="entry name" value="PRK05715.1-2"/>
    <property type="match status" value="1"/>
</dbReference>
<dbReference type="NCBIfam" id="NF004321">
    <property type="entry name" value="PRK05715.1-3"/>
    <property type="match status" value="1"/>
</dbReference>
<dbReference type="NCBIfam" id="NF004323">
    <property type="entry name" value="PRK05715.1-5"/>
    <property type="match status" value="1"/>
</dbReference>
<dbReference type="PANTHER" id="PTHR11434:SF21">
    <property type="entry name" value="NADH DEHYDROGENASE SUBUNIT 4L-RELATED"/>
    <property type="match status" value="1"/>
</dbReference>
<dbReference type="PANTHER" id="PTHR11434">
    <property type="entry name" value="NADH-UBIQUINONE OXIDOREDUCTASE SUBUNIT ND4L"/>
    <property type="match status" value="1"/>
</dbReference>
<dbReference type="Pfam" id="PF00420">
    <property type="entry name" value="Oxidored_q2"/>
    <property type="match status" value="1"/>
</dbReference>
<protein>
    <recommendedName>
        <fullName evidence="1">NADH-quinone oxidoreductase subunit K</fullName>
        <ecNumber evidence="1">7.1.1.-</ecNumber>
    </recommendedName>
    <alternativeName>
        <fullName evidence="1">NADH dehydrogenase I subunit K</fullName>
    </alternativeName>
    <alternativeName>
        <fullName evidence="1">NDH-1 subunit K</fullName>
    </alternativeName>
</protein>
<keyword id="KW-0997">Cell inner membrane</keyword>
<keyword id="KW-1003">Cell membrane</keyword>
<keyword id="KW-0472">Membrane</keyword>
<keyword id="KW-0520">NAD</keyword>
<keyword id="KW-0874">Quinone</keyword>
<keyword id="KW-1278">Translocase</keyword>
<keyword id="KW-0812">Transmembrane</keyword>
<keyword id="KW-1133">Transmembrane helix</keyword>
<keyword id="KW-0813">Transport</keyword>
<keyword id="KW-0830">Ubiquinone</keyword>
<feature type="chain" id="PRO_0000390094" description="NADH-quinone oxidoreductase subunit K">
    <location>
        <begin position="1"/>
        <end position="100"/>
    </location>
</feature>
<feature type="transmembrane region" description="Helical" evidence="1">
    <location>
        <begin position="1"/>
        <end position="21"/>
    </location>
</feature>
<feature type="transmembrane region" description="Helical" evidence="1">
    <location>
        <begin position="28"/>
        <end position="48"/>
    </location>
</feature>
<feature type="transmembrane region" description="Helical" evidence="1">
    <location>
        <begin position="64"/>
        <end position="84"/>
    </location>
</feature>
<organism>
    <name type="scientific">Helicobacter pylori (strain HPAG1)</name>
    <dbReference type="NCBI Taxonomy" id="357544"/>
    <lineage>
        <taxon>Bacteria</taxon>
        <taxon>Pseudomonadati</taxon>
        <taxon>Campylobacterota</taxon>
        <taxon>Epsilonproteobacteria</taxon>
        <taxon>Campylobacterales</taxon>
        <taxon>Helicobacteraceae</taxon>
        <taxon>Helicobacter</taxon>
    </lineage>
</organism>
<gene>
    <name evidence="1" type="primary">nuoK</name>
    <name type="ordered locus">HPAG1_1214</name>
</gene>